<gene>
    <name type="primary">dus3l</name>
</gene>
<comment type="function">
    <text evidence="3">Catalyzes the synthesis of dihydrouridine, a modified base, in various RNAs, such as tRNAs, mRNAs and some long non-coding RNAs (lncRNAs). Mainly modifies the uridine in position 47 (U47) in the D-loop of most cytoplasmic tRNAs. Also able to mediate the formation of dihydrouridine in some mRNAs, thereby regulating their translation.</text>
</comment>
<comment type="catalytic activity">
    <reaction evidence="1">
        <text>5,6-dihydrouridine(47) in tRNA + NAD(+) = uridine(47) in tRNA + NADH + H(+)</text>
        <dbReference type="Rhea" id="RHEA:53364"/>
        <dbReference type="Rhea" id="RHEA-COMP:13539"/>
        <dbReference type="Rhea" id="RHEA-COMP:13540"/>
        <dbReference type="ChEBI" id="CHEBI:15378"/>
        <dbReference type="ChEBI" id="CHEBI:57540"/>
        <dbReference type="ChEBI" id="CHEBI:57945"/>
        <dbReference type="ChEBI" id="CHEBI:65315"/>
        <dbReference type="ChEBI" id="CHEBI:74443"/>
        <dbReference type="EC" id="1.3.1.89"/>
    </reaction>
    <physiologicalReaction direction="right-to-left" evidence="1">
        <dbReference type="Rhea" id="RHEA:53366"/>
    </physiologicalReaction>
</comment>
<comment type="catalytic activity">
    <reaction evidence="1">
        <text>5,6-dihydrouridine(47) in tRNA + NADP(+) = uridine(47) in tRNA + NADPH + H(+)</text>
        <dbReference type="Rhea" id="RHEA:53360"/>
        <dbReference type="Rhea" id="RHEA-COMP:13539"/>
        <dbReference type="Rhea" id="RHEA-COMP:13540"/>
        <dbReference type="ChEBI" id="CHEBI:15378"/>
        <dbReference type="ChEBI" id="CHEBI:57783"/>
        <dbReference type="ChEBI" id="CHEBI:58349"/>
        <dbReference type="ChEBI" id="CHEBI:65315"/>
        <dbReference type="ChEBI" id="CHEBI:74443"/>
        <dbReference type="EC" id="1.3.1.89"/>
    </reaction>
    <physiologicalReaction direction="right-to-left" evidence="1">
        <dbReference type="Rhea" id="RHEA:53362"/>
    </physiologicalReaction>
</comment>
<comment type="catalytic activity">
    <reaction evidence="4">
        <text>a 5,6-dihydrouridine in mRNA + NAD(+) = a uridine in mRNA + NADH + H(+)</text>
        <dbReference type="Rhea" id="RHEA:69851"/>
        <dbReference type="Rhea" id="RHEA-COMP:14658"/>
        <dbReference type="Rhea" id="RHEA-COMP:17789"/>
        <dbReference type="ChEBI" id="CHEBI:15378"/>
        <dbReference type="ChEBI" id="CHEBI:57540"/>
        <dbReference type="ChEBI" id="CHEBI:57945"/>
        <dbReference type="ChEBI" id="CHEBI:65315"/>
        <dbReference type="ChEBI" id="CHEBI:74443"/>
    </reaction>
    <physiologicalReaction direction="right-to-left" evidence="4">
        <dbReference type="Rhea" id="RHEA:69853"/>
    </physiologicalReaction>
</comment>
<comment type="catalytic activity">
    <reaction evidence="4">
        <text>a 5,6-dihydrouridine in mRNA + NADP(+) = a uridine in mRNA + NADPH + H(+)</text>
        <dbReference type="Rhea" id="RHEA:69855"/>
        <dbReference type="Rhea" id="RHEA-COMP:14658"/>
        <dbReference type="Rhea" id="RHEA-COMP:17789"/>
        <dbReference type="ChEBI" id="CHEBI:15378"/>
        <dbReference type="ChEBI" id="CHEBI:57783"/>
        <dbReference type="ChEBI" id="CHEBI:58349"/>
        <dbReference type="ChEBI" id="CHEBI:65315"/>
        <dbReference type="ChEBI" id="CHEBI:74443"/>
    </reaction>
    <physiologicalReaction direction="right-to-left" evidence="4">
        <dbReference type="Rhea" id="RHEA:69857"/>
    </physiologicalReaction>
</comment>
<comment type="cofactor">
    <cofactor evidence="2">
        <name>FMN</name>
        <dbReference type="ChEBI" id="CHEBI:58210"/>
    </cofactor>
</comment>
<comment type="similarity">
    <text evidence="7">Belongs to the Dus family. Dus3 subfamily.</text>
</comment>
<sequence>MAESEGSNTENGKVGAVKSENLDRGVAAIKNQFLTTKEKFHAFIDADGKDVTEKETCSELSLNDAENTTRTENAAEPEAKRIKLDDGSSEGQDQPPKTAENKQEKKRARGQNKSRPHMKHSQFEENKLCPSVTQECASKCFFGDKCKFSHDVAKYVSQKPEDIRPNCHLYETFGKCIYGVTCRFAKSHLGEDFKNIINEELMKEWEGKVLVKNSLDKSLKEQLRKKKVVFEKSDKYLKLCFKSGDSSKMKNPVVKEDSAVQVTQKDSPITTVGAVTDEDVIKLRPCEKKTIDFRNKLYLAPLTTCGNLPFRRICKRLGADITCGEMAMCTNLLQGQPSEWALLKRHHSEDIFGVQLEGAFPDTMTKCAELLNRTIDVDFVDINVGCPIDLVYKKGGGCGLMNRTNKFEQIVKGMNSVLDVPLTVKIRTGVQEKVNIAHKLIPNLRDWGVSLVTLHGRSREQRYTKLANWEYIDQCAKIASPVPLFGNGDIISYEDANRALQTGVAGVMLARGALFKPWLFTEIKEQRHWDISSTERFDILKDFTNYGLEHWGSDCQGVEKTRKFMLEWLSFLCRYIPVGLLEHVPQKINERPPYYMGRDYLETLMASQNVTDWIKISEMLLGPVPPNFTFLPKHKANSYK</sequence>
<reference key="1">
    <citation type="submission" date="2003-02" db="EMBL/GenBank/DDBJ databases">
        <authorList>
            <consortium name="NIH - Xenopus Gene Collection (XGC) project"/>
        </authorList>
    </citation>
    <scope>NUCLEOTIDE SEQUENCE [LARGE SCALE MRNA]</scope>
    <source>
        <tissue>Embryo</tissue>
    </source>
</reference>
<evidence type="ECO:0000250" key="1">
    <source>
        <dbReference type="UniProtKB" id="Q06053"/>
    </source>
</evidence>
<evidence type="ECO:0000250" key="2">
    <source>
        <dbReference type="UniProtKB" id="Q5SMC7"/>
    </source>
</evidence>
<evidence type="ECO:0000250" key="3">
    <source>
        <dbReference type="UniProtKB" id="Q96G46"/>
    </source>
</evidence>
<evidence type="ECO:0000250" key="4">
    <source>
        <dbReference type="UniProtKB" id="Q9UTH9"/>
    </source>
</evidence>
<evidence type="ECO:0000255" key="5">
    <source>
        <dbReference type="PROSITE-ProRule" id="PRU00723"/>
    </source>
</evidence>
<evidence type="ECO:0000256" key="6">
    <source>
        <dbReference type="SAM" id="MobiDB-lite"/>
    </source>
</evidence>
<evidence type="ECO:0000305" key="7"/>
<keyword id="KW-0285">Flavoprotein</keyword>
<keyword id="KW-0288">FMN</keyword>
<keyword id="KW-0479">Metal-binding</keyword>
<keyword id="KW-0507">mRNA processing</keyword>
<keyword id="KW-0520">NAD</keyword>
<keyword id="KW-0521">NADP</keyword>
<keyword id="KW-0560">Oxidoreductase</keyword>
<keyword id="KW-1185">Reference proteome</keyword>
<keyword id="KW-0677">Repeat</keyword>
<keyword id="KW-0819">tRNA processing</keyword>
<keyword id="KW-0862">Zinc</keyword>
<keyword id="KW-0863">Zinc-finger</keyword>
<proteinExistence type="evidence at transcript level"/>
<organism>
    <name type="scientific">Xenopus laevis</name>
    <name type="common">African clawed frog</name>
    <dbReference type="NCBI Taxonomy" id="8355"/>
    <lineage>
        <taxon>Eukaryota</taxon>
        <taxon>Metazoa</taxon>
        <taxon>Chordata</taxon>
        <taxon>Craniata</taxon>
        <taxon>Vertebrata</taxon>
        <taxon>Euteleostomi</taxon>
        <taxon>Amphibia</taxon>
        <taxon>Batrachia</taxon>
        <taxon>Anura</taxon>
        <taxon>Pipoidea</taxon>
        <taxon>Pipidae</taxon>
        <taxon>Xenopodinae</taxon>
        <taxon>Xenopus</taxon>
        <taxon>Xenopus</taxon>
    </lineage>
</organism>
<dbReference type="EC" id="1.3.1.89" evidence="1"/>
<dbReference type="EC" id="1.3.1.-" evidence="1"/>
<dbReference type="EMBL" id="BC046730">
    <property type="protein sequence ID" value="AAH46730.1"/>
    <property type="molecule type" value="mRNA"/>
</dbReference>
<dbReference type="RefSeq" id="NP_001079662.1">
    <property type="nucleotide sequence ID" value="NM_001086193.1"/>
</dbReference>
<dbReference type="SMR" id="Q7ZWS1"/>
<dbReference type="DNASU" id="379349"/>
<dbReference type="GeneID" id="379349"/>
<dbReference type="KEGG" id="xla:379349"/>
<dbReference type="AGR" id="Xenbase:XB-GENE-943243"/>
<dbReference type="CTD" id="379349"/>
<dbReference type="Xenbase" id="XB-GENE-943243">
    <property type="gene designation" value="dus3l.L"/>
</dbReference>
<dbReference type="OMA" id="WSYIAEC"/>
<dbReference type="OrthoDB" id="259935at2759"/>
<dbReference type="Proteomes" id="UP000186698">
    <property type="component" value="Chromosome 6L"/>
</dbReference>
<dbReference type="Bgee" id="379349">
    <property type="expression patterns" value="Expressed in neurula embryo and 19 other cell types or tissues"/>
</dbReference>
<dbReference type="GO" id="GO:0050660">
    <property type="term" value="F:flavin adenine dinucleotide binding"/>
    <property type="evidence" value="ECO:0007669"/>
    <property type="project" value="InterPro"/>
</dbReference>
<dbReference type="GO" id="GO:0106414">
    <property type="term" value="F:mRNA dihydrouridine synthase activity"/>
    <property type="evidence" value="ECO:0007669"/>
    <property type="project" value="RHEA"/>
</dbReference>
<dbReference type="GO" id="GO:0003723">
    <property type="term" value="F:RNA binding"/>
    <property type="evidence" value="ECO:0007669"/>
    <property type="project" value="TreeGrafter"/>
</dbReference>
<dbReference type="GO" id="GO:0017150">
    <property type="term" value="F:tRNA dihydrouridine synthase activity"/>
    <property type="evidence" value="ECO:0000318"/>
    <property type="project" value="GO_Central"/>
</dbReference>
<dbReference type="GO" id="GO:0102265">
    <property type="term" value="F:tRNA-dihydrouridine47 synthase activity"/>
    <property type="evidence" value="ECO:0000250"/>
    <property type="project" value="UniProtKB"/>
</dbReference>
<dbReference type="GO" id="GO:0008270">
    <property type="term" value="F:zinc ion binding"/>
    <property type="evidence" value="ECO:0007669"/>
    <property type="project" value="UniProtKB-KW"/>
</dbReference>
<dbReference type="GO" id="GO:0006397">
    <property type="term" value="P:mRNA processing"/>
    <property type="evidence" value="ECO:0007669"/>
    <property type="project" value="UniProtKB-KW"/>
</dbReference>
<dbReference type="GO" id="GO:0006417">
    <property type="term" value="P:regulation of translation"/>
    <property type="evidence" value="ECO:0000250"/>
    <property type="project" value="UniProtKB"/>
</dbReference>
<dbReference type="GO" id="GO:0002943">
    <property type="term" value="P:tRNA dihydrouridine synthesis"/>
    <property type="evidence" value="ECO:0000250"/>
    <property type="project" value="UniProtKB"/>
</dbReference>
<dbReference type="CDD" id="cd02801">
    <property type="entry name" value="DUS_like_FMN"/>
    <property type="match status" value="1"/>
</dbReference>
<dbReference type="FunFam" id="3.20.20.70:FF:000067">
    <property type="entry name" value="tRNA-dihydrouridine(47) synthase [NAD(P)(+)]"/>
    <property type="match status" value="1"/>
</dbReference>
<dbReference type="FunFam" id="4.10.1000.10:FF:000029">
    <property type="entry name" value="tRNA-dihydrouridine(47) synthase [NAD(P)(+)]"/>
    <property type="match status" value="1"/>
</dbReference>
<dbReference type="Gene3D" id="3.20.20.70">
    <property type="entry name" value="Aldolase class I"/>
    <property type="match status" value="1"/>
</dbReference>
<dbReference type="Gene3D" id="4.10.1000.10">
    <property type="entry name" value="Zinc finger, CCCH-type"/>
    <property type="match status" value="1"/>
</dbReference>
<dbReference type="InterPro" id="IPR013785">
    <property type="entry name" value="Aldolase_TIM"/>
</dbReference>
<dbReference type="InterPro" id="IPR035587">
    <property type="entry name" value="DUS-like_FMN-bd"/>
</dbReference>
<dbReference type="InterPro" id="IPR018517">
    <property type="entry name" value="tRNA_hU_synthase_CS"/>
</dbReference>
<dbReference type="InterPro" id="IPR041367">
    <property type="entry name" value="Znf-CCCH_4"/>
</dbReference>
<dbReference type="InterPro" id="IPR000571">
    <property type="entry name" value="Znf_CCCH"/>
</dbReference>
<dbReference type="PANTHER" id="PTHR45846">
    <property type="entry name" value="TRNA-DIHYDROURIDINE(47) SYNTHASE [NAD(P)(+)]-LIKE"/>
    <property type="match status" value="1"/>
</dbReference>
<dbReference type="PANTHER" id="PTHR45846:SF1">
    <property type="entry name" value="TRNA-DIHYDROURIDINE(47) SYNTHASE [NAD(P)(+)]-LIKE"/>
    <property type="match status" value="1"/>
</dbReference>
<dbReference type="Pfam" id="PF01207">
    <property type="entry name" value="Dus"/>
    <property type="match status" value="1"/>
</dbReference>
<dbReference type="Pfam" id="PF18044">
    <property type="entry name" value="zf-CCCH_4"/>
    <property type="match status" value="1"/>
</dbReference>
<dbReference type="SUPFAM" id="SSF51395">
    <property type="entry name" value="FMN-linked oxidoreductases"/>
    <property type="match status" value="1"/>
</dbReference>
<dbReference type="PROSITE" id="PS01136">
    <property type="entry name" value="UPF0034"/>
    <property type="match status" value="1"/>
</dbReference>
<dbReference type="PROSITE" id="PS50103">
    <property type="entry name" value="ZF_C3H1"/>
    <property type="match status" value="2"/>
</dbReference>
<feature type="chain" id="PRO_0000247345" description="tRNA-dihydrouridine(47) synthase [NAD(P)(+)]-like">
    <location>
        <begin position="1"/>
        <end position="640"/>
    </location>
</feature>
<feature type="zinc finger region" description="C3H1-type 1" evidence="5">
    <location>
        <begin position="123"/>
        <end position="153"/>
    </location>
</feature>
<feature type="zinc finger region" description="C3H1-type 2" evidence="5">
    <location>
        <begin position="161"/>
        <end position="191"/>
    </location>
</feature>
<feature type="region of interest" description="Disordered" evidence="6">
    <location>
        <begin position="1"/>
        <end position="23"/>
    </location>
</feature>
<feature type="region of interest" description="Disordered" evidence="6">
    <location>
        <begin position="43"/>
        <end position="123"/>
    </location>
</feature>
<feature type="compositionally biased region" description="Polar residues" evidence="6">
    <location>
        <begin position="1"/>
        <end position="11"/>
    </location>
</feature>
<feature type="compositionally biased region" description="Basic and acidic residues" evidence="6">
    <location>
        <begin position="43"/>
        <end position="57"/>
    </location>
</feature>
<feature type="compositionally biased region" description="Polar residues" evidence="6">
    <location>
        <begin position="58"/>
        <end position="72"/>
    </location>
</feature>
<feature type="compositionally biased region" description="Basic and acidic residues" evidence="6">
    <location>
        <begin position="77"/>
        <end position="86"/>
    </location>
</feature>
<feature type="compositionally biased region" description="Basic residues" evidence="6">
    <location>
        <begin position="104"/>
        <end position="120"/>
    </location>
</feature>
<feature type="active site" description="Proton donor" evidence="2">
    <location>
        <position position="386"/>
    </location>
</feature>
<feature type="binding site" evidence="2">
    <location>
        <begin position="301"/>
        <end position="303"/>
    </location>
    <ligand>
        <name>FMN</name>
        <dbReference type="ChEBI" id="CHEBI:58210"/>
    </ligand>
</feature>
<feature type="binding site" evidence="2">
    <location>
        <position position="355"/>
    </location>
    <ligand>
        <name>FMN</name>
        <dbReference type="ChEBI" id="CHEBI:58210"/>
    </ligand>
</feature>
<feature type="binding site" evidence="2">
    <location>
        <position position="425"/>
    </location>
    <ligand>
        <name>FMN</name>
        <dbReference type="ChEBI" id="CHEBI:58210"/>
    </ligand>
</feature>
<feature type="binding site" evidence="2">
    <location>
        <position position="455"/>
    </location>
    <ligand>
        <name>FMN</name>
        <dbReference type="ChEBI" id="CHEBI:58210"/>
    </ligand>
</feature>
<feature type="binding site" evidence="2">
    <location>
        <begin position="487"/>
        <end position="489"/>
    </location>
    <ligand>
        <name>FMN</name>
        <dbReference type="ChEBI" id="CHEBI:58210"/>
    </ligand>
</feature>
<feature type="binding site" evidence="2">
    <location>
        <begin position="510"/>
        <end position="511"/>
    </location>
    <ligand>
        <name>FMN</name>
        <dbReference type="ChEBI" id="CHEBI:58210"/>
    </ligand>
</feature>
<accession>Q7ZWS1</accession>
<name>DUS3L_XENLA</name>
<protein>
    <recommendedName>
        <fullName evidence="7">tRNA-dihydrouridine(47) synthase [NAD(P)(+)]-like</fullName>
        <ecNumber evidence="1">1.3.1.89</ecNumber>
    </recommendedName>
    <alternativeName>
        <fullName evidence="7">mRNA-dihydrouridine synthase DUS3L</fullName>
        <ecNumber evidence="1">1.3.1.-</ecNumber>
    </alternativeName>
    <alternativeName>
        <fullName>tRNA-dihydrouridine synthase 3-like</fullName>
    </alternativeName>
</protein>